<reference key="1">
    <citation type="journal article" date="1997" name="Gene">
        <title>Identification and transcriptional analysis of a Treponema pallidum operon encoding a putative ABC transport system, an iron-activated repressor protein homolog, and a glycolytic pathway enzyme homolog.</title>
        <authorList>
            <person name="Hardham J.M."/>
            <person name="Stamm L.V."/>
            <person name="Porcella S.F."/>
            <person name="Frye J.G."/>
            <person name="Barnes N.Y."/>
            <person name="Howell J.K."/>
            <person name="Mueller S.L."/>
            <person name="Radolf J.D."/>
            <person name="Weinstock G.M."/>
            <person name="Norris S.J."/>
        </authorList>
    </citation>
    <scope>NUCLEOTIDE SEQUENCE [GENOMIC DNA]</scope>
    <source>
        <strain>Nichols</strain>
    </source>
</reference>
<reference key="2">
    <citation type="journal article" date="1998" name="Science">
        <title>Complete genome sequence of Treponema pallidum, the syphilis spirochete.</title>
        <authorList>
            <person name="Fraser C.M."/>
            <person name="Norris S.J."/>
            <person name="Weinstock G.M."/>
            <person name="White O."/>
            <person name="Sutton G.G."/>
            <person name="Dodson R.J."/>
            <person name="Gwinn M.L."/>
            <person name="Hickey E.K."/>
            <person name="Clayton R.A."/>
            <person name="Ketchum K.A."/>
            <person name="Sodergren E."/>
            <person name="Hardham J.M."/>
            <person name="McLeod M.P."/>
            <person name="Salzberg S.L."/>
            <person name="Peterson J.D."/>
            <person name="Khalak H.G."/>
            <person name="Richardson D.L."/>
            <person name="Howell J.K."/>
            <person name="Chidambaram M."/>
            <person name="Utterback T.R."/>
            <person name="McDonald L.A."/>
            <person name="Artiach P."/>
            <person name="Bowman C."/>
            <person name="Cotton M.D."/>
            <person name="Fujii C."/>
            <person name="Garland S.A."/>
            <person name="Hatch B."/>
            <person name="Horst K."/>
            <person name="Roberts K.M."/>
            <person name="Sandusky M."/>
            <person name="Weidman J.F."/>
            <person name="Smith H.O."/>
            <person name="Venter J.C."/>
        </authorList>
    </citation>
    <scope>NUCLEOTIDE SEQUENCE [LARGE SCALE GENOMIC DNA]</scope>
    <source>
        <strain>Nichols</strain>
    </source>
</reference>
<accession>P96117</accession>
<proteinExistence type="inferred from homology"/>
<sequence length="266" mass="29360">MAEISATAYAVQVDDLTLAYRQKPVLWDVDVRIPEGVIEAIIGPNGAGKSTLLKAIMGLLPLASGEVRVFGRPFSKERRRVAYVPQRSAVDWDFPTTVFDVVLMGSYGSLGWILRPGKREKARAREAIEEVGMGAFLDRQISELSGGQQQRVFLARALVQDADLYFMDEPFQGVDAATEQAIVTLLKTLKGRGKTLLVVHHDLQTVAEYFDRVLLLNVRVIAEGAVVSAFTEEYVQRAYGGRISSTLFPRGNKEDVHDARAHASVL</sequence>
<name>TROB_TREPA</name>
<keyword id="KW-0067">ATP-binding</keyword>
<keyword id="KW-0406">Ion transport</keyword>
<keyword id="KW-0547">Nucleotide-binding</keyword>
<keyword id="KW-1185">Reference proteome</keyword>
<keyword id="KW-0813">Transport</keyword>
<keyword id="KW-0862">Zinc</keyword>
<keyword id="KW-0864">Zinc transport</keyword>
<feature type="chain" id="PRO_0000093025" description="Zinc transport system ATP-binding protein TroB">
    <location>
        <begin position="1"/>
        <end position="266"/>
    </location>
</feature>
<feature type="domain" description="ABC transporter" evidence="1">
    <location>
        <begin position="11"/>
        <end position="243"/>
    </location>
</feature>
<feature type="binding site" evidence="1">
    <location>
        <begin position="43"/>
        <end position="50"/>
    </location>
    <ligand>
        <name>ATP</name>
        <dbReference type="ChEBI" id="CHEBI:30616"/>
    </ligand>
</feature>
<organism>
    <name type="scientific">Treponema pallidum (strain Nichols)</name>
    <dbReference type="NCBI Taxonomy" id="243276"/>
    <lineage>
        <taxon>Bacteria</taxon>
        <taxon>Pseudomonadati</taxon>
        <taxon>Spirochaetota</taxon>
        <taxon>Spirochaetia</taxon>
        <taxon>Spirochaetales</taxon>
        <taxon>Treponemataceae</taxon>
        <taxon>Treponema</taxon>
    </lineage>
</organism>
<gene>
    <name type="primary">troB</name>
    <name type="ordered locus">TP_0164</name>
</gene>
<comment type="function">
    <text>Part of an ATP-driven transport system TroABCD for zinc.</text>
</comment>
<comment type="similarity">
    <text evidence="2">Belongs to the ABC transporter superfamily.</text>
</comment>
<evidence type="ECO:0000255" key="1">
    <source>
        <dbReference type="PROSITE-ProRule" id="PRU00434"/>
    </source>
</evidence>
<evidence type="ECO:0000305" key="2"/>
<dbReference type="EMBL" id="U55214">
    <property type="protein sequence ID" value="AAC45726.1"/>
    <property type="molecule type" value="Genomic_DNA"/>
</dbReference>
<dbReference type="EMBL" id="AE000520">
    <property type="protein sequence ID" value="AAC65154.1"/>
    <property type="molecule type" value="Genomic_DNA"/>
</dbReference>
<dbReference type="PIR" id="A71357">
    <property type="entry name" value="A71357"/>
</dbReference>
<dbReference type="RefSeq" id="WP_010881611.1">
    <property type="nucleotide sequence ID" value="NC_021490.2"/>
</dbReference>
<dbReference type="SMR" id="P96117"/>
<dbReference type="IntAct" id="P96117">
    <property type="interactions" value="4"/>
</dbReference>
<dbReference type="STRING" id="243276.TP_0164"/>
<dbReference type="TCDB" id="3.A.1.15.8">
    <property type="family name" value="the atp-binding cassette (abc) superfamily"/>
</dbReference>
<dbReference type="EnsemblBacteria" id="AAC65154">
    <property type="protein sequence ID" value="AAC65154"/>
    <property type="gene ID" value="TP_0164"/>
</dbReference>
<dbReference type="GeneID" id="93875956"/>
<dbReference type="KEGG" id="tpa:TP_0164"/>
<dbReference type="KEGG" id="tpw:TPANIC_0164"/>
<dbReference type="eggNOG" id="COG1121">
    <property type="taxonomic scope" value="Bacteria"/>
</dbReference>
<dbReference type="HOGENOM" id="CLU_000604_1_11_12"/>
<dbReference type="OrthoDB" id="9806726at2"/>
<dbReference type="Proteomes" id="UP000000811">
    <property type="component" value="Chromosome"/>
</dbReference>
<dbReference type="GO" id="GO:0005524">
    <property type="term" value="F:ATP binding"/>
    <property type="evidence" value="ECO:0007669"/>
    <property type="project" value="UniProtKB-KW"/>
</dbReference>
<dbReference type="GO" id="GO:0016887">
    <property type="term" value="F:ATP hydrolysis activity"/>
    <property type="evidence" value="ECO:0007669"/>
    <property type="project" value="InterPro"/>
</dbReference>
<dbReference type="GO" id="GO:0006829">
    <property type="term" value="P:zinc ion transport"/>
    <property type="evidence" value="ECO:0007669"/>
    <property type="project" value="UniProtKB-KW"/>
</dbReference>
<dbReference type="CDD" id="cd03235">
    <property type="entry name" value="ABC_Metallic_Cations"/>
    <property type="match status" value="1"/>
</dbReference>
<dbReference type="FunFam" id="3.40.50.300:FF:000134">
    <property type="entry name" value="Iron-enterobactin ABC transporter ATP-binding protein"/>
    <property type="match status" value="1"/>
</dbReference>
<dbReference type="Gene3D" id="3.40.50.300">
    <property type="entry name" value="P-loop containing nucleotide triphosphate hydrolases"/>
    <property type="match status" value="1"/>
</dbReference>
<dbReference type="InterPro" id="IPR003593">
    <property type="entry name" value="AAA+_ATPase"/>
</dbReference>
<dbReference type="InterPro" id="IPR003439">
    <property type="entry name" value="ABC_transporter-like_ATP-bd"/>
</dbReference>
<dbReference type="InterPro" id="IPR017871">
    <property type="entry name" value="ABC_transporter-like_CS"/>
</dbReference>
<dbReference type="InterPro" id="IPR050153">
    <property type="entry name" value="Metal_Ion_Import_ABC"/>
</dbReference>
<dbReference type="InterPro" id="IPR027417">
    <property type="entry name" value="P-loop_NTPase"/>
</dbReference>
<dbReference type="PANTHER" id="PTHR42734:SF5">
    <property type="entry name" value="IRON TRANSPORT SYSTEM ATP-BINDING PROTEIN HI_0361-RELATED"/>
    <property type="match status" value="1"/>
</dbReference>
<dbReference type="PANTHER" id="PTHR42734">
    <property type="entry name" value="METAL TRANSPORT SYSTEM ATP-BINDING PROTEIN TM_0124-RELATED"/>
    <property type="match status" value="1"/>
</dbReference>
<dbReference type="Pfam" id="PF00005">
    <property type="entry name" value="ABC_tran"/>
    <property type="match status" value="1"/>
</dbReference>
<dbReference type="SMART" id="SM00382">
    <property type="entry name" value="AAA"/>
    <property type="match status" value="1"/>
</dbReference>
<dbReference type="SUPFAM" id="SSF52540">
    <property type="entry name" value="P-loop containing nucleoside triphosphate hydrolases"/>
    <property type="match status" value="1"/>
</dbReference>
<dbReference type="PROSITE" id="PS00211">
    <property type="entry name" value="ABC_TRANSPORTER_1"/>
    <property type="match status" value="1"/>
</dbReference>
<dbReference type="PROSITE" id="PS50893">
    <property type="entry name" value="ABC_TRANSPORTER_2"/>
    <property type="match status" value="1"/>
</dbReference>
<protein>
    <recommendedName>
        <fullName>Zinc transport system ATP-binding protein TroB</fullName>
    </recommendedName>
</protein>